<proteinExistence type="inferred from homology"/>
<evidence type="ECO:0000255" key="1">
    <source>
        <dbReference type="HAMAP-Rule" id="MF_00046"/>
    </source>
</evidence>
<dbReference type="EC" id="6.3.2.8" evidence="1"/>
<dbReference type="EMBL" id="CP000916">
    <property type="protein sequence ID" value="ACM22631.1"/>
    <property type="molecule type" value="Genomic_DNA"/>
</dbReference>
<dbReference type="RefSeq" id="WP_015918950.1">
    <property type="nucleotide sequence ID" value="NC_011978.1"/>
</dbReference>
<dbReference type="SMR" id="B9K6P8"/>
<dbReference type="STRING" id="309803.CTN_0455"/>
<dbReference type="KEGG" id="tna:CTN_0455"/>
<dbReference type="eggNOG" id="COG0773">
    <property type="taxonomic scope" value="Bacteria"/>
</dbReference>
<dbReference type="HOGENOM" id="CLU_028104_2_2_0"/>
<dbReference type="UniPathway" id="UPA00219"/>
<dbReference type="Proteomes" id="UP000000445">
    <property type="component" value="Chromosome"/>
</dbReference>
<dbReference type="GO" id="GO:0005737">
    <property type="term" value="C:cytoplasm"/>
    <property type="evidence" value="ECO:0007669"/>
    <property type="project" value="UniProtKB-SubCell"/>
</dbReference>
<dbReference type="GO" id="GO:0005524">
    <property type="term" value="F:ATP binding"/>
    <property type="evidence" value="ECO:0007669"/>
    <property type="project" value="UniProtKB-UniRule"/>
</dbReference>
<dbReference type="GO" id="GO:0008763">
    <property type="term" value="F:UDP-N-acetylmuramate-L-alanine ligase activity"/>
    <property type="evidence" value="ECO:0007669"/>
    <property type="project" value="UniProtKB-UniRule"/>
</dbReference>
<dbReference type="GO" id="GO:0051301">
    <property type="term" value="P:cell division"/>
    <property type="evidence" value="ECO:0007669"/>
    <property type="project" value="UniProtKB-KW"/>
</dbReference>
<dbReference type="GO" id="GO:0071555">
    <property type="term" value="P:cell wall organization"/>
    <property type="evidence" value="ECO:0007669"/>
    <property type="project" value="UniProtKB-KW"/>
</dbReference>
<dbReference type="GO" id="GO:0009252">
    <property type="term" value="P:peptidoglycan biosynthetic process"/>
    <property type="evidence" value="ECO:0007669"/>
    <property type="project" value="UniProtKB-UniRule"/>
</dbReference>
<dbReference type="GO" id="GO:0008360">
    <property type="term" value="P:regulation of cell shape"/>
    <property type="evidence" value="ECO:0007669"/>
    <property type="project" value="UniProtKB-KW"/>
</dbReference>
<dbReference type="Gene3D" id="3.90.190.20">
    <property type="entry name" value="Mur ligase, C-terminal domain"/>
    <property type="match status" value="1"/>
</dbReference>
<dbReference type="Gene3D" id="3.40.1190.10">
    <property type="entry name" value="Mur-like, catalytic domain"/>
    <property type="match status" value="1"/>
</dbReference>
<dbReference type="Gene3D" id="3.40.50.720">
    <property type="entry name" value="NAD(P)-binding Rossmann-like Domain"/>
    <property type="match status" value="1"/>
</dbReference>
<dbReference type="HAMAP" id="MF_00046">
    <property type="entry name" value="MurC"/>
    <property type="match status" value="1"/>
</dbReference>
<dbReference type="InterPro" id="IPR036565">
    <property type="entry name" value="Mur-like_cat_sf"/>
</dbReference>
<dbReference type="InterPro" id="IPR004101">
    <property type="entry name" value="Mur_ligase_C"/>
</dbReference>
<dbReference type="InterPro" id="IPR036615">
    <property type="entry name" value="Mur_ligase_C_dom_sf"/>
</dbReference>
<dbReference type="InterPro" id="IPR013221">
    <property type="entry name" value="Mur_ligase_cen"/>
</dbReference>
<dbReference type="InterPro" id="IPR000713">
    <property type="entry name" value="Mur_ligase_N"/>
</dbReference>
<dbReference type="InterPro" id="IPR050061">
    <property type="entry name" value="MurCDEF_pg_biosynth"/>
</dbReference>
<dbReference type="InterPro" id="IPR005758">
    <property type="entry name" value="UDP-N-AcMur_Ala_ligase_MurC"/>
</dbReference>
<dbReference type="NCBIfam" id="TIGR01082">
    <property type="entry name" value="murC"/>
    <property type="match status" value="1"/>
</dbReference>
<dbReference type="PANTHER" id="PTHR43445:SF3">
    <property type="entry name" value="UDP-N-ACETYLMURAMATE--L-ALANINE LIGASE"/>
    <property type="match status" value="1"/>
</dbReference>
<dbReference type="PANTHER" id="PTHR43445">
    <property type="entry name" value="UDP-N-ACETYLMURAMATE--L-ALANINE LIGASE-RELATED"/>
    <property type="match status" value="1"/>
</dbReference>
<dbReference type="Pfam" id="PF01225">
    <property type="entry name" value="Mur_ligase"/>
    <property type="match status" value="1"/>
</dbReference>
<dbReference type="Pfam" id="PF02875">
    <property type="entry name" value="Mur_ligase_C"/>
    <property type="match status" value="1"/>
</dbReference>
<dbReference type="Pfam" id="PF08245">
    <property type="entry name" value="Mur_ligase_M"/>
    <property type="match status" value="1"/>
</dbReference>
<dbReference type="SUPFAM" id="SSF51984">
    <property type="entry name" value="MurCD N-terminal domain"/>
    <property type="match status" value="1"/>
</dbReference>
<dbReference type="SUPFAM" id="SSF53623">
    <property type="entry name" value="MurD-like peptide ligases, catalytic domain"/>
    <property type="match status" value="1"/>
</dbReference>
<dbReference type="SUPFAM" id="SSF53244">
    <property type="entry name" value="MurD-like peptide ligases, peptide-binding domain"/>
    <property type="match status" value="1"/>
</dbReference>
<reference key="1">
    <citation type="submission" date="2007-11" db="EMBL/GenBank/DDBJ databases">
        <title>The genome sequence of the hyperthermophilic bacterium Thermotoga neapolitana.</title>
        <authorList>
            <person name="Lim S.K."/>
            <person name="Kim J.S."/>
            <person name="Cha S.H."/>
            <person name="Park B.C."/>
            <person name="Lee D.S."/>
            <person name="Tae H.S."/>
            <person name="Kim S.-J."/>
            <person name="Kim J.J."/>
            <person name="Park K.J."/>
            <person name="Lee S.Y."/>
        </authorList>
    </citation>
    <scope>NUCLEOTIDE SEQUENCE [LARGE SCALE GENOMIC DNA]</scope>
    <source>
        <strain>ATCC 49049 / DSM 4359 / NBRC 107923 / NS-E</strain>
    </source>
</reference>
<name>MURC_THENN</name>
<protein>
    <recommendedName>
        <fullName evidence="1">UDP-N-acetylmuramate--L-alanine ligase</fullName>
        <ecNumber evidence="1">6.3.2.8</ecNumber>
    </recommendedName>
    <alternativeName>
        <fullName evidence="1">UDP-N-acetylmuramoyl-L-alanine synthetase</fullName>
    </alternativeName>
</protein>
<comment type="function">
    <text evidence="1">Cell wall formation.</text>
</comment>
<comment type="catalytic activity">
    <reaction evidence="1">
        <text>UDP-N-acetyl-alpha-D-muramate + L-alanine + ATP = UDP-N-acetyl-alpha-D-muramoyl-L-alanine + ADP + phosphate + H(+)</text>
        <dbReference type="Rhea" id="RHEA:23372"/>
        <dbReference type="ChEBI" id="CHEBI:15378"/>
        <dbReference type="ChEBI" id="CHEBI:30616"/>
        <dbReference type="ChEBI" id="CHEBI:43474"/>
        <dbReference type="ChEBI" id="CHEBI:57972"/>
        <dbReference type="ChEBI" id="CHEBI:70757"/>
        <dbReference type="ChEBI" id="CHEBI:83898"/>
        <dbReference type="ChEBI" id="CHEBI:456216"/>
        <dbReference type="EC" id="6.3.2.8"/>
    </reaction>
</comment>
<comment type="pathway">
    <text evidence="1">Cell wall biogenesis; peptidoglycan biosynthesis.</text>
</comment>
<comment type="subcellular location">
    <subcellularLocation>
        <location evidence="1">Cytoplasm</location>
    </subcellularLocation>
</comment>
<comment type="similarity">
    <text evidence="1">Belongs to the MurCDEF family.</text>
</comment>
<sequence>MKIHFVGIGGIGMSALALHEFFSGNEVYGSNIEETERTTYLKKLKIPVFIPHSEENWFDPDVLVKTPAVHEDNPEIIRARKENVPVENRLSYFKVILKRENREEFAVTGTDGKTTTTAMIAHVLKELNRSPTAFLGGIMDSLEHGNYESGKGPVVYELDESEETFSEFSPNYLIITNARGDHLENYANSISRYRAAFERISRNSDLVITFAEDELTSHLGNVTFGVRKGMYTLEMRSASRSGQRAIIEKNRKRYAELKLRIPGFHNILNALAVTALFDSLGYDLEEVLKALERFPGVRRRFSISYHDPENNIYVVDDYAHTPEEIKNLLQTAKEVFENEKVVVIFQPHRYSRLEREDGNFARALQLADEVIVTEVYDAFEEKRPNVSGKIIWDSLMNLGKEAKFVDDLSRLNSVIVPRDNTVFLFVGAGDIIHYSKKFVETLQSSTNSPSRVSGSKR</sequence>
<feature type="chain" id="PRO_1000192119" description="UDP-N-acetylmuramate--L-alanine ligase">
    <location>
        <begin position="1"/>
        <end position="457"/>
    </location>
</feature>
<feature type="binding site" evidence="1">
    <location>
        <begin position="109"/>
        <end position="115"/>
    </location>
    <ligand>
        <name>ATP</name>
        <dbReference type="ChEBI" id="CHEBI:30616"/>
    </ligand>
</feature>
<organism>
    <name type="scientific">Thermotoga neapolitana (strain ATCC 49049 / DSM 4359 / NBRC 107923 / NS-E)</name>
    <dbReference type="NCBI Taxonomy" id="309803"/>
    <lineage>
        <taxon>Bacteria</taxon>
        <taxon>Thermotogati</taxon>
        <taxon>Thermotogota</taxon>
        <taxon>Thermotogae</taxon>
        <taxon>Thermotogales</taxon>
        <taxon>Thermotogaceae</taxon>
        <taxon>Thermotoga</taxon>
    </lineage>
</organism>
<keyword id="KW-0067">ATP-binding</keyword>
<keyword id="KW-0131">Cell cycle</keyword>
<keyword id="KW-0132">Cell division</keyword>
<keyword id="KW-0133">Cell shape</keyword>
<keyword id="KW-0961">Cell wall biogenesis/degradation</keyword>
<keyword id="KW-0963">Cytoplasm</keyword>
<keyword id="KW-0436">Ligase</keyword>
<keyword id="KW-0547">Nucleotide-binding</keyword>
<keyword id="KW-0573">Peptidoglycan synthesis</keyword>
<gene>
    <name evidence="1" type="primary">murC</name>
    <name type="ordered locus">CTN_0455</name>
</gene>
<accession>B9K6P8</accession>